<keyword id="KW-0007">Acetylation</keyword>
<keyword id="KW-0030">Aminoacyl-tRNA synthetase</keyword>
<keyword id="KW-0067">ATP-binding</keyword>
<keyword id="KW-0436">Ligase</keyword>
<keyword id="KW-0496">Mitochondrion</keyword>
<keyword id="KW-0547">Nucleotide-binding</keyword>
<keyword id="KW-0648">Protein biosynthesis</keyword>
<keyword id="KW-1185">Reference proteome</keyword>
<keyword id="KW-0809">Transit peptide</keyword>
<sequence length="477" mass="53962">MLGARRLLGALRLCSSVSCPRPRASAKMRVRDALRVQDARGECVTVQGWIRSVRSQKEVLFLHVNDGSSLESLQIVADSSFDSRELTFGSSVQVQGQLVKSQSKRQNVELKAEKIEVIGDCEAKAFPIKYKERHPLEYLRQYPHLRCRTNALGSILRVRSEATAAIHSYFKDNGFVHIHTPVLTSNDCEGAGELFQVEPSSKIKGPKESFFDVPAFLTVSGQLHLEVMSGAFTQVFTFGPTFRAENSQSRRHLAEFYMVEAEISFVESLQDLMQVMEELFKATTEMVLSHCPEDVELCHQFIAAGQKGRLEHMLKNNFLIISYTEAIEILKQASQNFAFTPKWGVDLQTEHEKYLVRHCGNIPVFVINYPSELKPFYMRENEDGPQNTVAAVDLLVPGVGELFGGSLREERYHVLEQRLARSGLTKAYQWYLDLRKFGSVPHGGFGMGFERYLQCILGVDNIKDVIPFPRFTHSCLL</sequence>
<feature type="transit peptide" description="Mitochondrion" evidence="2">
    <location>
        <begin position="1"/>
        <end position="14"/>
    </location>
</feature>
<feature type="chain" id="PRO_0000250723" description="Asparaginyl-tRNA synthetase">
    <location>
        <begin position="15"/>
        <end position="477"/>
    </location>
</feature>
<feature type="modified residue" description="N6-acetyllysine" evidence="7">
    <location>
        <position position="353"/>
    </location>
</feature>
<accession>Q8BGV0</accession>
<proteinExistence type="evidence at protein level"/>
<protein>
    <recommendedName>
        <fullName evidence="1">Asparaginyl-tRNA synthetase</fullName>
        <shortName evidence="1">AsnRS</shortName>
        <shortName evidence="4">NARS2</shortName>
        <ecNumber evidence="1">6.1.1.22</ecNumber>
    </recommendedName>
    <alternativeName>
        <fullName evidence="1">Asparagine--tRNA ligase, mitochondrial</fullName>
    </alternativeName>
</protein>
<gene>
    <name evidence="6" type="primary">Nars2</name>
</gene>
<comment type="function">
    <text evidence="1">Mitochondrial aminoacyl-tRNA synthetase that catalyzes the specific attachment of the asparagine amino acid (aa) to the homologous transfer RNA (tRNA), further participating in protein synthesis (By similarity). The reaction occurs in a two steps: asparagine is first activated by ATP to form Asn-AMP and then transferred to the acceptor end of tRNA(Asn) (By similarity).</text>
</comment>
<comment type="catalytic activity">
    <reaction evidence="1">
        <text>tRNA(Asn) + L-asparagine + ATP = L-asparaginyl-tRNA(Asn) + AMP + diphosphate + H(+)</text>
        <dbReference type="Rhea" id="RHEA:11180"/>
        <dbReference type="Rhea" id="RHEA-COMP:9659"/>
        <dbReference type="Rhea" id="RHEA-COMP:9674"/>
        <dbReference type="ChEBI" id="CHEBI:15378"/>
        <dbReference type="ChEBI" id="CHEBI:30616"/>
        <dbReference type="ChEBI" id="CHEBI:33019"/>
        <dbReference type="ChEBI" id="CHEBI:58048"/>
        <dbReference type="ChEBI" id="CHEBI:78442"/>
        <dbReference type="ChEBI" id="CHEBI:78515"/>
        <dbReference type="ChEBI" id="CHEBI:456215"/>
        <dbReference type="EC" id="6.1.1.22"/>
    </reaction>
</comment>
<comment type="subunit">
    <text evidence="1">Homodimer.</text>
</comment>
<comment type="subcellular location">
    <subcellularLocation>
        <location evidence="1">Mitochondrion matrix</location>
    </subcellularLocation>
    <subcellularLocation>
        <location evidence="1">Mitochondrion</location>
    </subcellularLocation>
</comment>
<comment type="tissue specificity">
    <text evidence="3">Expressed in brain and inner ear, including the cochlear epithelium and organ of Corti.</text>
</comment>
<comment type="similarity">
    <text evidence="5">Belongs to the class-II aminoacyl-tRNA synthetase family.</text>
</comment>
<reference key="1">
    <citation type="journal article" date="2005" name="Science">
        <title>The transcriptional landscape of the mammalian genome.</title>
        <authorList>
            <person name="Carninci P."/>
            <person name="Kasukawa T."/>
            <person name="Katayama S."/>
            <person name="Gough J."/>
            <person name="Frith M.C."/>
            <person name="Maeda N."/>
            <person name="Oyama R."/>
            <person name="Ravasi T."/>
            <person name="Lenhard B."/>
            <person name="Wells C."/>
            <person name="Kodzius R."/>
            <person name="Shimokawa K."/>
            <person name="Bajic V.B."/>
            <person name="Brenner S.E."/>
            <person name="Batalov S."/>
            <person name="Forrest A.R."/>
            <person name="Zavolan M."/>
            <person name="Davis M.J."/>
            <person name="Wilming L.G."/>
            <person name="Aidinis V."/>
            <person name="Allen J.E."/>
            <person name="Ambesi-Impiombato A."/>
            <person name="Apweiler R."/>
            <person name="Aturaliya R.N."/>
            <person name="Bailey T.L."/>
            <person name="Bansal M."/>
            <person name="Baxter L."/>
            <person name="Beisel K.W."/>
            <person name="Bersano T."/>
            <person name="Bono H."/>
            <person name="Chalk A.M."/>
            <person name="Chiu K.P."/>
            <person name="Choudhary V."/>
            <person name="Christoffels A."/>
            <person name="Clutterbuck D.R."/>
            <person name="Crowe M.L."/>
            <person name="Dalla E."/>
            <person name="Dalrymple B.P."/>
            <person name="de Bono B."/>
            <person name="Della Gatta G."/>
            <person name="di Bernardo D."/>
            <person name="Down T."/>
            <person name="Engstrom P."/>
            <person name="Fagiolini M."/>
            <person name="Faulkner G."/>
            <person name="Fletcher C.F."/>
            <person name="Fukushima T."/>
            <person name="Furuno M."/>
            <person name="Futaki S."/>
            <person name="Gariboldi M."/>
            <person name="Georgii-Hemming P."/>
            <person name="Gingeras T.R."/>
            <person name="Gojobori T."/>
            <person name="Green R.E."/>
            <person name="Gustincich S."/>
            <person name="Harbers M."/>
            <person name="Hayashi Y."/>
            <person name="Hensch T.K."/>
            <person name="Hirokawa N."/>
            <person name="Hill D."/>
            <person name="Huminiecki L."/>
            <person name="Iacono M."/>
            <person name="Ikeo K."/>
            <person name="Iwama A."/>
            <person name="Ishikawa T."/>
            <person name="Jakt M."/>
            <person name="Kanapin A."/>
            <person name="Katoh M."/>
            <person name="Kawasawa Y."/>
            <person name="Kelso J."/>
            <person name="Kitamura H."/>
            <person name="Kitano H."/>
            <person name="Kollias G."/>
            <person name="Krishnan S.P."/>
            <person name="Kruger A."/>
            <person name="Kummerfeld S.K."/>
            <person name="Kurochkin I.V."/>
            <person name="Lareau L.F."/>
            <person name="Lazarevic D."/>
            <person name="Lipovich L."/>
            <person name="Liu J."/>
            <person name="Liuni S."/>
            <person name="McWilliam S."/>
            <person name="Madan Babu M."/>
            <person name="Madera M."/>
            <person name="Marchionni L."/>
            <person name="Matsuda H."/>
            <person name="Matsuzawa S."/>
            <person name="Miki H."/>
            <person name="Mignone F."/>
            <person name="Miyake S."/>
            <person name="Morris K."/>
            <person name="Mottagui-Tabar S."/>
            <person name="Mulder N."/>
            <person name="Nakano N."/>
            <person name="Nakauchi H."/>
            <person name="Ng P."/>
            <person name="Nilsson R."/>
            <person name="Nishiguchi S."/>
            <person name="Nishikawa S."/>
            <person name="Nori F."/>
            <person name="Ohara O."/>
            <person name="Okazaki Y."/>
            <person name="Orlando V."/>
            <person name="Pang K.C."/>
            <person name="Pavan W.J."/>
            <person name="Pavesi G."/>
            <person name="Pesole G."/>
            <person name="Petrovsky N."/>
            <person name="Piazza S."/>
            <person name="Reed J."/>
            <person name="Reid J.F."/>
            <person name="Ring B.Z."/>
            <person name="Ringwald M."/>
            <person name="Rost B."/>
            <person name="Ruan Y."/>
            <person name="Salzberg S.L."/>
            <person name="Sandelin A."/>
            <person name="Schneider C."/>
            <person name="Schoenbach C."/>
            <person name="Sekiguchi K."/>
            <person name="Semple C.A."/>
            <person name="Seno S."/>
            <person name="Sessa L."/>
            <person name="Sheng Y."/>
            <person name="Shibata Y."/>
            <person name="Shimada H."/>
            <person name="Shimada K."/>
            <person name="Silva D."/>
            <person name="Sinclair B."/>
            <person name="Sperling S."/>
            <person name="Stupka E."/>
            <person name="Sugiura K."/>
            <person name="Sultana R."/>
            <person name="Takenaka Y."/>
            <person name="Taki K."/>
            <person name="Tammoja K."/>
            <person name="Tan S.L."/>
            <person name="Tang S."/>
            <person name="Taylor M.S."/>
            <person name="Tegner J."/>
            <person name="Teichmann S.A."/>
            <person name="Ueda H.R."/>
            <person name="van Nimwegen E."/>
            <person name="Verardo R."/>
            <person name="Wei C.L."/>
            <person name="Yagi K."/>
            <person name="Yamanishi H."/>
            <person name="Zabarovsky E."/>
            <person name="Zhu S."/>
            <person name="Zimmer A."/>
            <person name="Hide W."/>
            <person name="Bult C."/>
            <person name="Grimmond S.M."/>
            <person name="Teasdale R.D."/>
            <person name="Liu E.T."/>
            <person name="Brusic V."/>
            <person name="Quackenbush J."/>
            <person name="Wahlestedt C."/>
            <person name="Mattick J.S."/>
            <person name="Hume D.A."/>
            <person name="Kai C."/>
            <person name="Sasaki D."/>
            <person name="Tomaru Y."/>
            <person name="Fukuda S."/>
            <person name="Kanamori-Katayama M."/>
            <person name="Suzuki M."/>
            <person name="Aoki J."/>
            <person name="Arakawa T."/>
            <person name="Iida J."/>
            <person name="Imamura K."/>
            <person name="Itoh M."/>
            <person name="Kato T."/>
            <person name="Kawaji H."/>
            <person name="Kawagashira N."/>
            <person name="Kawashima T."/>
            <person name="Kojima M."/>
            <person name="Kondo S."/>
            <person name="Konno H."/>
            <person name="Nakano K."/>
            <person name="Ninomiya N."/>
            <person name="Nishio T."/>
            <person name="Okada M."/>
            <person name="Plessy C."/>
            <person name="Shibata K."/>
            <person name="Shiraki T."/>
            <person name="Suzuki S."/>
            <person name="Tagami M."/>
            <person name="Waki K."/>
            <person name="Watahiki A."/>
            <person name="Okamura-Oho Y."/>
            <person name="Suzuki H."/>
            <person name="Kawai J."/>
            <person name="Hayashizaki Y."/>
        </authorList>
    </citation>
    <scope>NUCLEOTIDE SEQUENCE [LARGE SCALE MRNA]</scope>
    <source>
        <strain>C57BL/6J</strain>
        <tissue>Cerebellum</tissue>
        <tissue>Hippocampus</tissue>
        <tissue>Hypothalamus</tissue>
        <tissue>Medulla oblongata</tissue>
    </source>
</reference>
<reference key="2">
    <citation type="journal article" date="2010" name="Cell">
        <title>A tissue-specific atlas of mouse protein phosphorylation and expression.</title>
        <authorList>
            <person name="Huttlin E.L."/>
            <person name="Jedrychowski M.P."/>
            <person name="Elias J.E."/>
            <person name="Goswami T."/>
            <person name="Rad R."/>
            <person name="Beausoleil S.A."/>
            <person name="Villen J."/>
            <person name="Haas W."/>
            <person name="Sowa M.E."/>
            <person name="Gygi S.P."/>
        </authorList>
    </citation>
    <scope>IDENTIFICATION BY MASS SPECTROMETRY [LARGE SCALE ANALYSIS]</scope>
    <source>
        <tissue>Brown adipose tissue</tissue>
        <tissue>Kidney</tissue>
    </source>
</reference>
<reference key="3">
    <citation type="journal article" date="2013" name="Proc. Natl. Acad. Sci. U.S.A.">
        <title>Label-free quantitative proteomics of the lysine acetylome in mitochondria identifies substrates of SIRT3 in metabolic pathways.</title>
        <authorList>
            <person name="Rardin M.J."/>
            <person name="Newman J.C."/>
            <person name="Held J.M."/>
            <person name="Cusack M.P."/>
            <person name="Sorensen D.J."/>
            <person name="Li B."/>
            <person name="Schilling B."/>
            <person name="Mooney S.D."/>
            <person name="Kahn C.R."/>
            <person name="Verdin E."/>
            <person name="Gibson B.W."/>
        </authorList>
    </citation>
    <scope>ACETYLATION [LARGE SCALE ANALYSIS] AT LYS-353</scope>
    <scope>IDENTIFICATION BY MASS SPECTROMETRY [LARGE SCALE ANALYSIS]</scope>
    <source>
        <tissue>Liver</tissue>
    </source>
</reference>
<reference key="4">
    <citation type="journal article" date="2015" name="PLoS Genet.">
        <title>Mutations of human NARS2, encoding the mitochondrial asparaginyl-tRNA synthetase, cause nonsyndromic deafness and Leigh syndrome.</title>
        <authorList>
            <person name="Simon M."/>
            <person name="Richard E.M."/>
            <person name="Wang X."/>
            <person name="Shahzad M."/>
            <person name="Huang V.H."/>
            <person name="Qaiser T.A."/>
            <person name="Potluri P."/>
            <person name="Mahl S.E."/>
            <person name="Davila A."/>
            <person name="Nazli S."/>
            <person name="Hancock S."/>
            <person name="Yu M."/>
            <person name="Gargus J."/>
            <person name="Chang R."/>
            <person name="Al-Sheqaih N."/>
            <person name="Newman W.G."/>
            <person name="Abdenur J."/>
            <person name="Starr A."/>
            <person name="Hegde R."/>
            <person name="Dorn T."/>
            <person name="Busch A."/>
            <person name="Park E."/>
            <person name="Wu J."/>
            <person name="Schwenzer H."/>
            <person name="Flierl A."/>
            <person name="Florentz C."/>
            <person name="Sissler M."/>
            <person name="Khan S.N."/>
            <person name="Li R."/>
            <person name="Guan M.X."/>
            <person name="Friedman T.B."/>
            <person name="Wu D.K."/>
            <person name="Procaccio V."/>
            <person name="Riazuddin S."/>
            <person name="Wallace D.C."/>
            <person name="Ahmed Z.M."/>
            <person name="Huang T."/>
            <person name="Riazuddin S."/>
        </authorList>
    </citation>
    <scope>TISSUE SPECIFICITY</scope>
</reference>
<evidence type="ECO:0000250" key="1">
    <source>
        <dbReference type="UniProtKB" id="Q96I59"/>
    </source>
</evidence>
<evidence type="ECO:0000255" key="2"/>
<evidence type="ECO:0000269" key="3">
    <source>
    </source>
</evidence>
<evidence type="ECO:0000303" key="4">
    <source>
    </source>
</evidence>
<evidence type="ECO:0000305" key="5"/>
<evidence type="ECO:0000312" key="6">
    <source>
        <dbReference type="MGI" id="MGI:2142075"/>
    </source>
</evidence>
<evidence type="ECO:0007744" key="7">
    <source>
    </source>
</evidence>
<organism>
    <name type="scientific">Mus musculus</name>
    <name type="common">Mouse</name>
    <dbReference type="NCBI Taxonomy" id="10090"/>
    <lineage>
        <taxon>Eukaryota</taxon>
        <taxon>Metazoa</taxon>
        <taxon>Chordata</taxon>
        <taxon>Craniata</taxon>
        <taxon>Vertebrata</taxon>
        <taxon>Euteleostomi</taxon>
        <taxon>Mammalia</taxon>
        <taxon>Eutheria</taxon>
        <taxon>Euarchontoglires</taxon>
        <taxon>Glires</taxon>
        <taxon>Rodentia</taxon>
        <taxon>Myomorpha</taxon>
        <taxon>Muroidea</taxon>
        <taxon>Muridae</taxon>
        <taxon>Murinae</taxon>
        <taxon>Mus</taxon>
        <taxon>Mus</taxon>
    </lineage>
</organism>
<dbReference type="EC" id="6.1.1.22" evidence="1"/>
<dbReference type="EMBL" id="AK046799">
    <property type="protein sequence ID" value="BAC32875.1"/>
    <property type="molecule type" value="mRNA"/>
</dbReference>
<dbReference type="EMBL" id="AK047091">
    <property type="protein sequence ID" value="BAC32958.1"/>
    <property type="molecule type" value="mRNA"/>
</dbReference>
<dbReference type="EMBL" id="AK050718">
    <property type="protein sequence ID" value="BAC34391.1"/>
    <property type="molecule type" value="mRNA"/>
</dbReference>
<dbReference type="EMBL" id="AK138260">
    <property type="protein sequence ID" value="BAE23597.1"/>
    <property type="molecule type" value="mRNA"/>
</dbReference>
<dbReference type="EMBL" id="AK164179">
    <property type="protein sequence ID" value="BAE37666.1"/>
    <property type="molecule type" value="mRNA"/>
</dbReference>
<dbReference type="CCDS" id="CCDS21454.1"/>
<dbReference type="RefSeq" id="NP_705819.3">
    <property type="nucleotide sequence ID" value="NM_153591.4"/>
</dbReference>
<dbReference type="SMR" id="Q8BGV0"/>
<dbReference type="BioGRID" id="232609">
    <property type="interactions" value="9"/>
</dbReference>
<dbReference type="FunCoup" id="Q8BGV0">
    <property type="interactions" value="3026"/>
</dbReference>
<dbReference type="STRING" id="10090.ENSMUSP00000044937"/>
<dbReference type="GlyGen" id="Q8BGV0">
    <property type="glycosylation" value="1 site, 1 O-linked glycan (1 site)"/>
</dbReference>
<dbReference type="iPTMnet" id="Q8BGV0"/>
<dbReference type="PhosphoSitePlus" id="Q8BGV0"/>
<dbReference type="SwissPalm" id="Q8BGV0"/>
<dbReference type="jPOST" id="Q8BGV0"/>
<dbReference type="PaxDb" id="10090-ENSMUSP00000044937"/>
<dbReference type="PeptideAtlas" id="Q8BGV0"/>
<dbReference type="ProteomicsDB" id="254715"/>
<dbReference type="Pumba" id="Q8BGV0"/>
<dbReference type="Antibodypedia" id="17519">
    <property type="antibodies" value="187 antibodies from 25 providers"/>
</dbReference>
<dbReference type="DNASU" id="244141"/>
<dbReference type="Ensembl" id="ENSMUST00000044466.12">
    <property type="protein sequence ID" value="ENSMUSP00000044937.6"/>
    <property type="gene ID" value="ENSMUSG00000018995.13"/>
</dbReference>
<dbReference type="GeneID" id="244141"/>
<dbReference type="KEGG" id="mmu:244141"/>
<dbReference type="UCSC" id="uc009iiw.2">
    <property type="organism name" value="mouse"/>
</dbReference>
<dbReference type="AGR" id="MGI:2142075"/>
<dbReference type="CTD" id="79731"/>
<dbReference type="MGI" id="MGI:2142075">
    <property type="gene designation" value="Nars2"/>
</dbReference>
<dbReference type="VEuPathDB" id="HostDB:ENSMUSG00000018995"/>
<dbReference type="eggNOG" id="KOG0554">
    <property type="taxonomic scope" value="Eukaryota"/>
</dbReference>
<dbReference type="GeneTree" id="ENSGT01030000234618"/>
<dbReference type="HOGENOM" id="CLU_004553_2_0_1"/>
<dbReference type="InParanoid" id="Q8BGV0"/>
<dbReference type="OMA" id="PEMAFYD"/>
<dbReference type="OrthoDB" id="1931232at2759"/>
<dbReference type="PhylomeDB" id="Q8BGV0"/>
<dbReference type="TreeFam" id="TF315088"/>
<dbReference type="BioGRID-ORCS" id="244141">
    <property type="hits" value="31 hits in 82 CRISPR screens"/>
</dbReference>
<dbReference type="ChiTaRS" id="Nars2">
    <property type="organism name" value="mouse"/>
</dbReference>
<dbReference type="PRO" id="PR:Q8BGV0"/>
<dbReference type="Proteomes" id="UP000000589">
    <property type="component" value="Chromosome 7"/>
</dbReference>
<dbReference type="RNAct" id="Q8BGV0">
    <property type="molecule type" value="protein"/>
</dbReference>
<dbReference type="Bgee" id="ENSMUSG00000018995">
    <property type="expression patterns" value="Expressed in right kidney and 231 other cell types or tissues"/>
</dbReference>
<dbReference type="ExpressionAtlas" id="Q8BGV0">
    <property type="expression patterns" value="baseline and differential"/>
</dbReference>
<dbReference type="GO" id="GO:0005829">
    <property type="term" value="C:cytosol"/>
    <property type="evidence" value="ECO:0007669"/>
    <property type="project" value="Ensembl"/>
</dbReference>
<dbReference type="GO" id="GO:0005759">
    <property type="term" value="C:mitochondrial matrix"/>
    <property type="evidence" value="ECO:0007669"/>
    <property type="project" value="UniProtKB-SubCell"/>
</dbReference>
<dbReference type="GO" id="GO:0005739">
    <property type="term" value="C:mitochondrion"/>
    <property type="evidence" value="ECO:0007005"/>
    <property type="project" value="MGI"/>
</dbReference>
<dbReference type="GO" id="GO:0005654">
    <property type="term" value="C:nucleoplasm"/>
    <property type="evidence" value="ECO:0007669"/>
    <property type="project" value="Ensembl"/>
</dbReference>
<dbReference type="GO" id="GO:0004816">
    <property type="term" value="F:asparagine-tRNA ligase activity"/>
    <property type="evidence" value="ECO:0000250"/>
    <property type="project" value="UniProtKB"/>
</dbReference>
<dbReference type="GO" id="GO:0005524">
    <property type="term" value="F:ATP binding"/>
    <property type="evidence" value="ECO:0007669"/>
    <property type="project" value="UniProtKB-KW"/>
</dbReference>
<dbReference type="GO" id="GO:0003676">
    <property type="term" value="F:nucleic acid binding"/>
    <property type="evidence" value="ECO:0007669"/>
    <property type="project" value="InterPro"/>
</dbReference>
<dbReference type="GO" id="GO:0006421">
    <property type="term" value="P:asparaginyl-tRNA aminoacylation"/>
    <property type="evidence" value="ECO:0000250"/>
    <property type="project" value="UniProtKB"/>
</dbReference>
<dbReference type="CDD" id="cd00776">
    <property type="entry name" value="AsxRS_core"/>
    <property type="match status" value="1"/>
</dbReference>
<dbReference type="CDD" id="cd04318">
    <property type="entry name" value="EcAsnRS_like_N"/>
    <property type="match status" value="1"/>
</dbReference>
<dbReference type="FunFam" id="2.40.50.140:FF:000310">
    <property type="entry name" value="Probable asparagine--tRNA ligase, mitochondrial"/>
    <property type="match status" value="1"/>
</dbReference>
<dbReference type="FunFam" id="3.30.930.10:FF:000075">
    <property type="entry name" value="probable asparagine--tRNA ligase, mitochondrial isoform X1"/>
    <property type="match status" value="1"/>
</dbReference>
<dbReference type="Gene3D" id="3.30.930.10">
    <property type="entry name" value="Bira Bifunctional Protein, Domain 2"/>
    <property type="match status" value="1"/>
</dbReference>
<dbReference type="Gene3D" id="2.40.50.140">
    <property type="entry name" value="Nucleic acid-binding proteins"/>
    <property type="match status" value="1"/>
</dbReference>
<dbReference type="HAMAP" id="MF_00534">
    <property type="entry name" value="Asn_tRNA_synth"/>
    <property type="match status" value="1"/>
</dbReference>
<dbReference type="InterPro" id="IPR004364">
    <property type="entry name" value="Aa-tRNA-synt_II"/>
</dbReference>
<dbReference type="InterPro" id="IPR006195">
    <property type="entry name" value="aa-tRNA-synth_II"/>
</dbReference>
<dbReference type="InterPro" id="IPR045864">
    <property type="entry name" value="aa-tRNA-synth_II/BPL/LPL"/>
</dbReference>
<dbReference type="InterPro" id="IPR004522">
    <property type="entry name" value="Asn-tRNA-ligase"/>
</dbReference>
<dbReference type="InterPro" id="IPR002312">
    <property type="entry name" value="Asp/Asn-tRNA-synth_IIb"/>
</dbReference>
<dbReference type="InterPro" id="IPR012340">
    <property type="entry name" value="NA-bd_OB-fold"/>
</dbReference>
<dbReference type="InterPro" id="IPR004365">
    <property type="entry name" value="NA-bd_OB_tRNA"/>
</dbReference>
<dbReference type="NCBIfam" id="TIGR00457">
    <property type="entry name" value="asnS"/>
    <property type="match status" value="1"/>
</dbReference>
<dbReference type="NCBIfam" id="NF003037">
    <property type="entry name" value="PRK03932.1"/>
    <property type="match status" value="1"/>
</dbReference>
<dbReference type="PANTHER" id="PTHR22594:SF34">
    <property type="entry name" value="ASPARAGINE--TRNA LIGASE, MITOCHONDRIAL-RELATED"/>
    <property type="match status" value="1"/>
</dbReference>
<dbReference type="PANTHER" id="PTHR22594">
    <property type="entry name" value="ASPARTYL/LYSYL-TRNA SYNTHETASE"/>
    <property type="match status" value="1"/>
</dbReference>
<dbReference type="Pfam" id="PF00152">
    <property type="entry name" value="tRNA-synt_2"/>
    <property type="match status" value="1"/>
</dbReference>
<dbReference type="Pfam" id="PF01336">
    <property type="entry name" value="tRNA_anti-codon"/>
    <property type="match status" value="1"/>
</dbReference>
<dbReference type="PRINTS" id="PR01042">
    <property type="entry name" value="TRNASYNTHASP"/>
</dbReference>
<dbReference type="SUPFAM" id="SSF55681">
    <property type="entry name" value="Class II aaRS and biotin synthetases"/>
    <property type="match status" value="1"/>
</dbReference>
<dbReference type="SUPFAM" id="SSF50249">
    <property type="entry name" value="Nucleic acid-binding proteins"/>
    <property type="match status" value="1"/>
</dbReference>
<dbReference type="PROSITE" id="PS50862">
    <property type="entry name" value="AA_TRNA_LIGASE_II"/>
    <property type="match status" value="1"/>
</dbReference>
<name>SYNM_MOUSE</name>